<comment type="function">
    <text evidence="1">Can oxidize menadiol to menadione.</text>
</comment>
<comment type="catalytic activity">
    <reaction evidence="1">
        <text>menadiol + 2 O2 = menadione + 2 superoxide + 2 H(+)</text>
        <dbReference type="Rhea" id="RHEA:35611"/>
        <dbReference type="ChEBI" id="CHEBI:6746"/>
        <dbReference type="ChEBI" id="CHEBI:15378"/>
        <dbReference type="ChEBI" id="CHEBI:15379"/>
        <dbReference type="ChEBI" id="CHEBI:18421"/>
        <dbReference type="ChEBI" id="CHEBI:28869"/>
    </reaction>
</comment>
<comment type="subunit">
    <text evidence="1">Homodimer.</text>
</comment>
<evidence type="ECO:0000250" key="1">
    <source>
        <dbReference type="UniProtKB" id="P0ADU2"/>
    </source>
</evidence>
<gene>
    <name type="primary">ygiN</name>
    <name type="ordered locus">Z4380</name>
    <name type="ordered locus">ECs3911</name>
</gene>
<accession>P0ADU3</accession>
<accession>P40718</accession>
<dbReference type="EC" id="1.-.-.-" evidence="1"/>
<dbReference type="EMBL" id="AE005174">
    <property type="protein sequence ID" value="AAG58162.1"/>
    <property type="molecule type" value="Genomic_DNA"/>
</dbReference>
<dbReference type="EMBL" id="BA000007">
    <property type="protein sequence ID" value="BAB37334.1"/>
    <property type="molecule type" value="Genomic_DNA"/>
</dbReference>
<dbReference type="PIR" id="F85962">
    <property type="entry name" value="F85962"/>
</dbReference>
<dbReference type="PIR" id="G91117">
    <property type="entry name" value="G91117"/>
</dbReference>
<dbReference type="RefSeq" id="NP_311938.1">
    <property type="nucleotide sequence ID" value="NC_002695.1"/>
</dbReference>
<dbReference type="RefSeq" id="WP_000958598.1">
    <property type="nucleotide sequence ID" value="NZ_VOAI01000009.1"/>
</dbReference>
<dbReference type="SMR" id="P0ADU3"/>
<dbReference type="STRING" id="155864.Z4380"/>
<dbReference type="GeneID" id="916263"/>
<dbReference type="KEGG" id="ece:Z4380"/>
<dbReference type="KEGG" id="ecs:ECs_3911"/>
<dbReference type="PATRIC" id="fig|386585.9.peg.4079"/>
<dbReference type="eggNOG" id="COG1359">
    <property type="taxonomic scope" value="Bacteria"/>
</dbReference>
<dbReference type="HOGENOM" id="CLU_131496_13_1_6"/>
<dbReference type="OMA" id="HLQTAHM"/>
<dbReference type="Proteomes" id="UP000000558">
    <property type="component" value="Chromosome"/>
</dbReference>
<dbReference type="Proteomes" id="UP000002519">
    <property type="component" value="Chromosome"/>
</dbReference>
<dbReference type="GO" id="GO:0005829">
    <property type="term" value="C:cytosol"/>
    <property type="evidence" value="ECO:0007669"/>
    <property type="project" value="TreeGrafter"/>
</dbReference>
<dbReference type="GO" id="GO:0016491">
    <property type="term" value="F:oxidoreductase activity"/>
    <property type="evidence" value="ECO:0007669"/>
    <property type="project" value="UniProtKB-KW"/>
</dbReference>
<dbReference type="FunFam" id="3.30.70.100:FF:000006">
    <property type="entry name" value="Antibiotic biosynthesis monooxygenase"/>
    <property type="match status" value="1"/>
</dbReference>
<dbReference type="Gene3D" id="3.30.70.100">
    <property type="match status" value="1"/>
</dbReference>
<dbReference type="InterPro" id="IPR007138">
    <property type="entry name" value="ABM_dom"/>
</dbReference>
<dbReference type="InterPro" id="IPR050744">
    <property type="entry name" value="AI-2_Isomerase_LsrG"/>
</dbReference>
<dbReference type="InterPro" id="IPR011008">
    <property type="entry name" value="Dimeric_a/b-barrel"/>
</dbReference>
<dbReference type="PANTHER" id="PTHR33336:SF3">
    <property type="entry name" value="ABM DOMAIN-CONTAINING PROTEIN"/>
    <property type="match status" value="1"/>
</dbReference>
<dbReference type="PANTHER" id="PTHR33336">
    <property type="entry name" value="QUINOL MONOOXYGENASE YGIN-RELATED"/>
    <property type="match status" value="1"/>
</dbReference>
<dbReference type="Pfam" id="PF03992">
    <property type="entry name" value="ABM"/>
    <property type="match status" value="1"/>
</dbReference>
<dbReference type="SUPFAM" id="SSF54909">
    <property type="entry name" value="Dimeric alpha+beta barrel"/>
    <property type="match status" value="1"/>
</dbReference>
<dbReference type="PROSITE" id="PS51725">
    <property type="entry name" value="ABM"/>
    <property type="match status" value="1"/>
</dbReference>
<reference key="1">
    <citation type="journal article" date="2001" name="Nature">
        <title>Genome sequence of enterohaemorrhagic Escherichia coli O157:H7.</title>
        <authorList>
            <person name="Perna N.T."/>
            <person name="Plunkett G. III"/>
            <person name="Burland V."/>
            <person name="Mau B."/>
            <person name="Glasner J.D."/>
            <person name="Rose D.J."/>
            <person name="Mayhew G.F."/>
            <person name="Evans P.S."/>
            <person name="Gregor J."/>
            <person name="Kirkpatrick H.A."/>
            <person name="Posfai G."/>
            <person name="Hackett J."/>
            <person name="Klink S."/>
            <person name="Boutin A."/>
            <person name="Shao Y."/>
            <person name="Miller L."/>
            <person name="Grotbeck E.J."/>
            <person name="Davis N.W."/>
            <person name="Lim A."/>
            <person name="Dimalanta E.T."/>
            <person name="Potamousis K."/>
            <person name="Apodaca J."/>
            <person name="Anantharaman T.S."/>
            <person name="Lin J."/>
            <person name="Yen G."/>
            <person name="Schwartz D.C."/>
            <person name="Welch R.A."/>
            <person name="Blattner F.R."/>
        </authorList>
    </citation>
    <scope>NUCLEOTIDE SEQUENCE [LARGE SCALE GENOMIC DNA]</scope>
    <source>
        <strain>O157:H7 / EDL933 / ATCC 700927 / EHEC</strain>
    </source>
</reference>
<reference key="2">
    <citation type="journal article" date="2001" name="DNA Res.">
        <title>Complete genome sequence of enterohemorrhagic Escherichia coli O157:H7 and genomic comparison with a laboratory strain K-12.</title>
        <authorList>
            <person name="Hayashi T."/>
            <person name="Makino K."/>
            <person name="Ohnishi M."/>
            <person name="Kurokawa K."/>
            <person name="Ishii K."/>
            <person name="Yokoyama K."/>
            <person name="Han C.-G."/>
            <person name="Ohtsubo E."/>
            <person name="Nakayama K."/>
            <person name="Murata T."/>
            <person name="Tanaka M."/>
            <person name="Tobe T."/>
            <person name="Iida T."/>
            <person name="Takami H."/>
            <person name="Honda T."/>
            <person name="Sasakawa C."/>
            <person name="Ogasawara N."/>
            <person name="Yasunaga T."/>
            <person name="Kuhara S."/>
            <person name="Shiba T."/>
            <person name="Hattori M."/>
            <person name="Shinagawa H."/>
        </authorList>
    </citation>
    <scope>NUCLEOTIDE SEQUENCE [LARGE SCALE GENOMIC DNA]</scope>
    <source>
        <strain>O157:H7 / Sakai / RIMD 0509952 / EHEC</strain>
    </source>
</reference>
<proteinExistence type="inferred from homology"/>
<organism>
    <name type="scientific">Escherichia coli O157:H7</name>
    <dbReference type="NCBI Taxonomy" id="83334"/>
    <lineage>
        <taxon>Bacteria</taxon>
        <taxon>Pseudomonadati</taxon>
        <taxon>Pseudomonadota</taxon>
        <taxon>Gammaproteobacteria</taxon>
        <taxon>Enterobacterales</taxon>
        <taxon>Enterobacteriaceae</taxon>
        <taxon>Escherichia</taxon>
    </lineage>
</organism>
<name>YGIN_ECO57</name>
<protein>
    <recommendedName>
        <fullName evidence="1">Probable quinol monooxygenase YgiN</fullName>
        <shortName evidence="1">QuMo</shortName>
        <ecNumber evidence="1">1.-.-.-</ecNumber>
    </recommendedName>
</protein>
<sequence length="104" mass="11532">MLTVIAEIRTRPGQHHRQAVLDQFAKIVPTVLKEEGCHGYAPMVDCAAGVSFQSMAPDSIVMIEQWESIAHLEAHLQTPHMKAYSEAVKGDVLEMNIRILQPGI</sequence>
<feature type="chain" id="PRO_0000169409" description="Probable quinol monooxygenase YgiN">
    <location>
        <begin position="1"/>
        <end position="104"/>
    </location>
</feature>
<feature type="domain" description="ABM">
    <location>
        <begin position="2"/>
        <end position="100"/>
    </location>
</feature>
<keyword id="KW-0560">Oxidoreductase</keyword>
<keyword id="KW-1185">Reference proteome</keyword>